<sequence>MNIKKNLMKIDIQNVCKKNIFFPKKKYFFLWLKNIFKNKKIEITIRIVDMLEMKFLNKKYKKKNSLTNVLSFQSPDSIKIKHRFLNYIGDIILCAPYINKEANILKKKKIELWAHMTIHSTLHLLHYSHKDSKSKKNMQKTEIYIMKKLGYNNPYN</sequence>
<dbReference type="EC" id="3.1.-.-" evidence="1"/>
<dbReference type="EMBL" id="CP000263">
    <property type="protein sequence ID" value="ABJ90735.1"/>
    <property type="molecule type" value="Genomic_DNA"/>
</dbReference>
<dbReference type="SMR" id="Q057G4"/>
<dbReference type="STRING" id="372461.BCc_273"/>
<dbReference type="KEGG" id="bcc:BCc_273"/>
<dbReference type="eggNOG" id="COG0319">
    <property type="taxonomic scope" value="Bacteria"/>
</dbReference>
<dbReference type="HOGENOM" id="CLU_106710_0_1_6"/>
<dbReference type="OrthoDB" id="9807740at2"/>
<dbReference type="Proteomes" id="UP000000669">
    <property type="component" value="Chromosome"/>
</dbReference>
<dbReference type="GO" id="GO:0005737">
    <property type="term" value="C:cytoplasm"/>
    <property type="evidence" value="ECO:0007669"/>
    <property type="project" value="UniProtKB-SubCell"/>
</dbReference>
<dbReference type="GO" id="GO:0004222">
    <property type="term" value="F:metalloendopeptidase activity"/>
    <property type="evidence" value="ECO:0007669"/>
    <property type="project" value="InterPro"/>
</dbReference>
<dbReference type="GO" id="GO:0004521">
    <property type="term" value="F:RNA endonuclease activity"/>
    <property type="evidence" value="ECO:0007669"/>
    <property type="project" value="UniProtKB-UniRule"/>
</dbReference>
<dbReference type="GO" id="GO:0008270">
    <property type="term" value="F:zinc ion binding"/>
    <property type="evidence" value="ECO:0007669"/>
    <property type="project" value="UniProtKB-UniRule"/>
</dbReference>
<dbReference type="GO" id="GO:0006364">
    <property type="term" value="P:rRNA processing"/>
    <property type="evidence" value="ECO:0007669"/>
    <property type="project" value="UniProtKB-UniRule"/>
</dbReference>
<dbReference type="Gene3D" id="3.40.390.30">
    <property type="entry name" value="Metalloproteases ('zincins'), catalytic domain"/>
    <property type="match status" value="1"/>
</dbReference>
<dbReference type="HAMAP" id="MF_00009">
    <property type="entry name" value="Endoribonucl_YbeY"/>
    <property type="match status" value="1"/>
</dbReference>
<dbReference type="InterPro" id="IPR023091">
    <property type="entry name" value="MetalPrtase_cat_dom_sf_prd"/>
</dbReference>
<dbReference type="InterPro" id="IPR002036">
    <property type="entry name" value="YbeY"/>
</dbReference>
<dbReference type="NCBIfam" id="TIGR00043">
    <property type="entry name" value="rRNA maturation RNase YbeY"/>
    <property type="match status" value="1"/>
</dbReference>
<dbReference type="PANTHER" id="PTHR46986">
    <property type="entry name" value="ENDORIBONUCLEASE YBEY, CHLOROPLASTIC"/>
    <property type="match status" value="1"/>
</dbReference>
<dbReference type="PANTHER" id="PTHR46986:SF1">
    <property type="entry name" value="ENDORIBONUCLEASE YBEY, CHLOROPLASTIC"/>
    <property type="match status" value="1"/>
</dbReference>
<dbReference type="Pfam" id="PF02130">
    <property type="entry name" value="YbeY"/>
    <property type="match status" value="1"/>
</dbReference>
<dbReference type="SUPFAM" id="SSF55486">
    <property type="entry name" value="Metalloproteases ('zincins'), catalytic domain"/>
    <property type="match status" value="1"/>
</dbReference>
<accession>Q057G4</accession>
<proteinExistence type="inferred from homology"/>
<feature type="chain" id="PRO_0000284171" description="Endoribonuclease YbeY">
    <location>
        <begin position="1"/>
        <end position="156"/>
    </location>
</feature>
<feature type="binding site" evidence="1">
    <location>
        <position position="119"/>
    </location>
    <ligand>
        <name>Zn(2+)</name>
        <dbReference type="ChEBI" id="CHEBI:29105"/>
        <note>catalytic</note>
    </ligand>
</feature>
<feature type="binding site" evidence="1">
    <location>
        <position position="123"/>
    </location>
    <ligand>
        <name>Zn(2+)</name>
        <dbReference type="ChEBI" id="CHEBI:29105"/>
        <note>catalytic</note>
    </ligand>
</feature>
<feature type="binding site" evidence="1">
    <location>
        <position position="129"/>
    </location>
    <ligand>
        <name>Zn(2+)</name>
        <dbReference type="ChEBI" id="CHEBI:29105"/>
        <note>catalytic</note>
    </ligand>
</feature>
<protein>
    <recommendedName>
        <fullName evidence="1">Endoribonuclease YbeY</fullName>
        <ecNumber evidence="1">3.1.-.-</ecNumber>
    </recommendedName>
</protein>
<evidence type="ECO:0000255" key="1">
    <source>
        <dbReference type="HAMAP-Rule" id="MF_00009"/>
    </source>
</evidence>
<keyword id="KW-0963">Cytoplasm</keyword>
<keyword id="KW-0255">Endonuclease</keyword>
<keyword id="KW-0378">Hydrolase</keyword>
<keyword id="KW-0479">Metal-binding</keyword>
<keyword id="KW-0540">Nuclease</keyword>
<keyword id="KW-1185">Reference proteome</keyword>
<keyword id="KW-0690">Ribosome biogenesis</keyword>
<keyword id="KW-0698">rRNA processing</keyword>
<keyword id="KW-0862">Zinc</keyword>
<organism>
    <name type="scientific">Buchnera aphidicola subsp. Cinara cedri (strain Cc)</name>
    <dbReference type="NCBI Taxonomy" id="372461"/>
    <lineage>
        <taxon>Bacteria</taxon>
        <taxon>Pseudomonadati</taxon>
        <taxon>Pseudomonadota</taxon>
        <taxon>Gammaproteobacteria</taxon>
        <taxon>Enterobacterales</taxon>
        <taxon>Erwiniaceae</taxon>
        <taxon>Buchnera</taxon>
    </lineage>
</organism>
<gene>
    <name evidence="1" type="primary">ybeY</name>
    <name type="ordered locus">BCc_273</name>
</gene>
<comment type="function">
    <text evidence="1">Single strand-specific metallo-endoribonuclease involved in late-stage 70S ribosome quality control and in maturation of the 3' terminus of the 16S rRNA.</text>
</comment>
<comment type="cofactor">
    <cofactor evidence="1">
        <name>Zn(2+)</name>
        <dbReference type="ChEBI" id="CHEBI:29105"/>
    </cofactor>
    <text evidence="1">Binds 1 zinc ion.</text>
</comment>
<comment type="subcellular location">
    <subcellularLocation>
        <location evidence="1">Cytoplasm</location>
    </subcellularLocation>
</comment>
<comment type="similarity">
    <text evidence="1">Belongs to the endoribonuclease YbeY family.</text>
</comment>
<reference key="1">
    <citation type="journal article" date="2006" name="Science">
        <title>A small microbial genome: the end of a long symbiotic relationship?</title>
        <authorList>
            <person name="Perez-Brocal V."/>
            <person name="Gil R."/>
            <person name="Ramos S."/>
            <person name="Lamelas A."/>
            <person name="Postigo M."/>
            <person name="Michelena J.M."/>
            <person name="Silva F.J."/>
            <person name="Moya A."/>
            <person name="Latorre A."/>
        </authorList>
    </citation>
    <scope>NUCLEOTIDE SEQUENCE [LARGE SCALE GENOMIC DNA]</scope>
    <source>
        <strain>Cc</strain>
    </source>
</reference>
<name>YBEY_BUCCC</name>